<name>STS1_HUMLU</name>
<organism evidence="6">
    <name type="scientific">Humulus lupulus</name>
    <name type="common">European hop</name>
    <dbReference type="NCBI Taxonomy" id="3486"/>
    <lineage>
        <taxon>Eukaryota</taxon>
        <taxon>Viridiplantae</taxon>
        <taxon>Streptophyta</taxon>
        <taxon>Embryophyta</taxon>
        <taxon>Tracheophyta</taxon>
        <taxon>Spermatophyta</taxon>
        <taxon>Magnoliopsida</taxon>
        <taxon>eudicotyledons</taxon>
        <taxon>Gunneridae</taxon>
        <taxon>Pentapetalae</taxon>
        <taxon>rosids</taxon>
        <taxon>fabids</taxon>
        <taxon>Rosales</taxon>
        <taxon>Cannabaceae</taxon>
        <taxon>Humulus</taxon>
    </lineage>
</organism>
<reference key="1">
    <citation type="journal article" date="2008" name="Plant Physiol.">
        <title>Terpene biosynthesis in glandular trichomes of hop.</title>
        <authorList>
            <person name="Wang G."/>
            <person name="Tian L."/>
            <person name="Aziz N."/>
            <person name="Broun P."/>
            <person name="Dai X."/>
            <person name="He J."/>
            <person name="King A."/>
            <person name="Zhao P.X."/>
            <person name="Dixon R.A."/>
        </authorList>
    </citation>
    <scope>NUCLEOTIDE SEQUENCE [MRNA]</scope>
    <scope>FUNCTION</scope>
    <scope>SUBSTRATE SPECIFICITY</scope>
    <scope>CATALYTIC ACTIVITY</scope>
    <scope>BIOPHYSICOCHEMICAL PROPERTIES</scope>
    <scope>TISSUE SPECIFICITY</scope>
    <scope>PATHWAY</scope>
    <source>
        <tissue>Lupulin gland</tissue>
    </source>
</reference>
<evidence type="ECO:0000250" key="1">
    <source>
        <dbReference type="UniProtKB" id="A0A1C9J6A7"/>
    </source>
</evidence>
<evidence type="ECO:0000250" key="2">
    <source>
        <dbReference type="UniProtKB" id="Q40577"/>
    </source>
</evidence>
<evidence type="ECO:0000269" key="3">
    <source>
    </source>
</evidence>
<evidence type="ECO:0000303" key="4">
    <source>
    </source>
</evidence>
<evidence type="ECO:0000305" key="5"/>
<evidence type="ECO:0000312" key="6">
    <source>
        <dbReference type="EMBL" id="ACI32639.1"/>
    </source>
</evidence>
<proteinExistence type="evidence at protein level"/>
<dbReference type="EC" id="4.2.3.104" evidence="3"/>
<dbReference type="EMBL" id="EU760350">
    <property type="protein sequence ID" value="ACI32639.1"/>
    <property type="molecule type" value="mRNA"/>
</dbReference>
<dbReference type="SMR" id="B6SCF5"/>
<dbReference type="UniPathway" id="UPA00213"/>
<dbReference type="GO" id="GO:0080017">
    <property type="term" value="F:alpha-humulene synthase activity"/>
    <property type="evidence" value="ECO:0007669"/>
    <property type="project" value="UniProtKB-EC"/>
</dbReference>
<dbReference type="GO" id="GO:0000287">
    <property type="term" value="F:magnesium ion binding"/>
    <property type="evidence" value="ECO:0007669"/>
    <property type="project" value="InterPro"/>
</dbReference>
<dbReference type="GO" id="GO:0016102">
    <property type="term" value="P:diterpenoid biosynthetic process"/>
    <property type="evidence" value="ECO:0007669"/>
    <property type="project" value="InterPro"/>
</dbReference>
<dbReference type="CDD" id="cd00684">
    <property type="entry name" value="Terpene_cyclase_plant_C1"/>
    <property type="match status" value="1"/>
</dbReference>
<dbReference type="FunFam" id="1.10.600.10:FF:000007">
    <property type="entry name" value="Isoprene synthase, chloroplastic"/>
    <property type="match status" value="1"/>
</dbReference>
<dbReference type="FunFam" id="1.50.10.130:FF:000001">
    <property type="entry name" value="Isoprene synthase, chloroplastic"/>
    <property type="match status" value="1"/>
</dbReference>
<dbReference type="Gene3D" id="1.10.600.10">
    <property type="entry name" value="Farnesyl Diphosphate Synthase"/>
    <property type="match status" value="1"/>
</dbReference>
<dbReference type="Gene3D" id="1.50.10.130">
    <property type="entry name" value="Terpene synthase, N-terminal domain"/>
    <property type="match status" value="1"/>
</dbReference>
<dbReference type="InterPro" id="IPR008949">
    <property type="entry name" value="Isoprenoid_synthase_dom_sf"/>
</dbReference>
<dbReference type="InterPro" id="IPR034741">
    <property type="entry name" value="Terpene_cyclase-like_1_C"/>
</dbReference>
<dbReference type="InterPro" id="IPR044814">
    <property type="entry name" value="Terpene_cyclase_plant_C1"/>
</dbReference>
<dbReference type="InterPro" id="IPR001906">
    <property type="entry name" value="Terpene_synth_N"/>
</dbReference>
<dbReference type="InterPro" id="IPR036965">
    <property type="entry name" value="Terpene_synth_N_sf"/>
</dbReference>
<dbReference type="InterPro" id="IPR050148">
    <property type="entry name" value="Terpene_synthase-like"/>
</dbReference>
<dbReference type="InterPro" id="IPR005630">
    <property type="entry name" value="Terpene_synthase_metal-bd"/>
</dbReference>
<dbReference type="InterPro" id="IPR008930">
    <property type="entry name" value="Terpenoid_cyclase/PrenylTrfase"/>
</dbReference>
<dbReference type="PANTHER" id="PTHR31225:SF93">
    <property type="entry name" value="ALPHA-HUMULENE_(-)-(E)-BETA-CARYOPHYLLENE SYNTHASE"/>
    <property type="match status" value="1"/>
</dbReference>
<dbReference type="PANTHER" id="PTHR31225">
    <property type="entry name" value="OS04G0344100 PROTEIN-RELATED"/>
    <property type="match status" value="1"/>
</dbReference>
<dbReference type="Pfam" id="PF01397">
    <property type="entry name" value="Terpene_synth"/>
    <property type="match status" value="1"/>
</dbReference>
<dbReference type="Pfam" id="PF03936">
    <property type="entry name" value="Terpene_synth_C"/>
    <property type="match status" value="1"/>
</dbReference>
<dbReference type="SFLD" id="SFLDS00005">
    <property type="entry name" value="Isoprenoid_Synthase_Type_I"/>
    <property type="match status" value="1"/>
</dbReference>
<dbReference type="SFLD" id="SFLDG01019">
    <property type="entry name" value="Terpene_Cyclase_Like_1_C_Termi"/>
    <property type="match status" value="1"/>
</dbReference>
<dbReference type="SUPFAM" id="SSF48239">
    <property type="entry name" value="Terpenoid cyclases/Protein prenyltransferases"/>
    <property type="match status" value="1"/>
</dbReference>
<dbReference type="SUPFAM" id="SSF48576">
    <property type="entry name" value="Terpenoid synthases"/>
    <property type="match status" value="1"/>
</dbReference>
<sequence>MSTQILASSSQNEKIHKILRPTKKFQPPVWGERFLHYNISEQELRYKQQQVEELKEVVKKEIFGESAYDVSHQLKLINVVERLGLSYHFESEIENELESIYNKSVGQNYILKDENLHDASLRFRLLRQHGFRVSSPDIFEKFKDEDGNFKECLVSDTIGLLSLYEASHLSCVGENILDEALAFTTTHLTEFLANKKEHDDPLSREISQALERPLRKSLERLAARHFISIYENETSHNKVLLQLAKLDFNLLQSIHKKELSEISRWWKESDFVLKFPFARERIVELYLWILGAYYEPQYSMARNVLTKIIAFASLADDIYDEYGTFEELELLTEAVERWDIYIIDKLNPEYLQTFYKELLNSYEEFEQELPKEETYRVHYAKERFKELLRSYLEEAWWLKEERVPSFDEYLKISLISCGYHMLIVSSLIGMKSSIVTKEVFEWLSMDRKIIRASSTICRFMDDLAEHKFEQEKNDEPTAVECYMKQYGVSEEEAYDELNKQIANAWKEINEELLKPTGVASPILVRVLNFSKFMDLFYKNGDSYTQVGKVAKDSVAALLIDPIP</sequence>
<protein>
    <recommendedName>
        <fullName evidence="5">Alpha-humulene synthase</fullName>
        <ecNumber evidence="3">4.2.3.104</ecNumber>
    </recommendedName>
    <alternativeName>
        <fullName evidence="4">Sesquiterpene synthase STS1</fullName>
        <shortName evidence="4">HlSTS1</shortName>
    </alternativeName>
</protein>
<accession>B6SCF5</accession>
<keyword id="KW-0456">Lyase</keyword>
<keyword id="KW-0460">Magnesium</keyword>
<keyword id="KW-0479">Metal-binding</keyword>
<feature type="chain" id="PRO_0000439238" description="Alpha-humulene synthase">
    <location>
        <begin position="1"/>
        <end position="563"/>
    </location>
</feature>
<feature type="short sequence motif" description="DDXXD motif" evidence="1">
    <location>
        <begin position="316"/>
        <end position="320"/>
    </location>
</feature>
<feature type="binding site" evidence="2">
    <location>
        <position position="316"/>
    </location>
    <ligand>
        <name>Mg(2+)</name>
        <dbReference type="ChEBI" id="CHEBI:18420"/>
        <label>1</label>
    </ligand>
</feature>
<feature type="binding site" evidence="2">
    <location>
        <position position="316"/>
    </location>
    <ligand>
        <name>Mg(2+)</name>
        <dbReference type="ChEBI" id="CHEBI:18420"/>
        <label>2</label>
    </ligand>
</feature>
<feature type="binding site" evidence="2">
    <location>
        <position position="320"/>
    </location>
    <ligand>
        <name>Mg(2+)</name>
        <dbReference type="ChEBI" id="CHEBI:18420"/>
        <label>1</label>
    </ligand>
</feature>
<feature type="binding site" evidence="2">
    <location>
        <position position="320"/>
    </location>
    <ligand>
        <name>Mg(2+)</name>
        <dbReference type="ChEBI" id="CHEBI:18420"/>
        <label>2</label>
    </ligand>
</feature>
<feature type="binding site" evidence="2">
    <location>
        <position position="461"/>
    </location>
    <ligand>
        <name>Mg(2+)</name>
        <dbReference type="ChEBI" id="CHEBI:18420"/>
        <label>3</label>
    </ligand>
</feature>
<feature type="binding site" evidence="2">
    <location>
        <position position="469"/>
    </location>
    <ligand>
        <name>Mg(2+)</name>
        <dbReference type="ChEBI" id="CHEBI:18420"/>
        <label>3</label>
    </ligand>
</feature>
<comment type="function">
    <text evidence="3">Sesquiterpene synthase that catalyzes the formation of alpha-humulene. Can use farnesyl diphosphate (FPP) as substrate, but not geranyl diphosphate (GPP) or geranylgeranyl diphosphate (GGPP).</text>
</comment>
<comment type="catalytic activity">
    <reaction evidence="3">
        <text>(2E,6E)-farnesyl diphosphate = alpha-humulene + diphosphate</text>
        <dbReference type="Rhea" id="RHEA:31895"/>
        <dbReference type="ChEBI" id="CHEBI:5768"/>
        <dbReference type="ChEBI" id="CHEBI:33019"/>
        <dbReference type="ChEBI" id="CHEBI:175763"/>
        <dbReference type="EC" id="4.2.3.104"/>
    </reaction>
</comment>
<comment type="cofactor">
    <cofactor evidence="1">
        <name>Mg(2+)</name>
        <dbReference type="ChEBI" id="CHEBI:18420"/>
    </cofactor>
    <cofactor evidence="1">
        <name>Mn(2+)</name>
        <dbReference type="ChEBI" id="CHEBI:29035"/>
    </cofactor>
    <text evidence="1">Binds 3 Mg(2+) or Mn(2+) ions per subunit.</text>
</comment>
<comment type="biophysicochemical properties">
    <kinetics>
        <KM evidence="3">0.7 uM for (2E,6E)-farnesyl diphosphate</KM>
    </kinetics>
</comment>
<comment type="pathway">
    <text evidence="3">Sesquiterpene biosynthesis.</text>
</comment>
<comment type="pathway">
    <text evidence="3">Secondary metabolite biosynthesis; terpenoid biosynthesis.</text>
</comment>
<comment type="tissue specificity">
    <text evidence="3">Expressed in trichomes, cones and young leaves.</text>
</comment>
<comment type="domain">
    <text evidence="2">The Asp-Asp-Xaa-Xaa-Asp/Glu (DDXXD/E) motif is important for the catalytic activity, presumably through binding to Mg(2+).</text>
</comment>
<comment type="similarity">
    <text evidence="5">Belongs to the terpene synthase family. Tpsa subfamily.</text>
</comment>